<dbReference type="EC" id="2.6.1.9" evidence="1"/>
<dbReference type="EMBL" id="CR628336">
    <property type="protein sequence ID" value="CAH13131.1"/>
    <property type="molecule type" value="Genomic_DNA"/>
</dbReference>
<dbReference type="SMR" id="Q5X3Q5"/>
<dbReference type="KEGG" id="lpp:lpp1979"/>
<dbReference type="LegioList" id="lpp1979"/>
<dbReference type="HOGENOM" id="CLU_017584_3_3_6"/>
<dbReference type="UniPathway" id="UPA00031">
    <property type="reaction ID" value="UER00012"/>
</dbReference>
<dbReference type="GO" id="GO:0004400">
    <property type="term" value="F:histidinol-phosphate transaminase activity"/>
    <property type="evidence" value="ECO:0007669"/>
    <property type="project" value="UniProtKB-UniRule"/>
</dbReference>
<dbReference type="GO" id="GO:0030170">
    <property type="term" value="F:pyridoxal phosphate binding"/>
    <property type="evidence" value="ECO:0007669"/>
    <property type="project" value="InterPro"/>
</dbReference>
<dbReference type="GO" id="GO:0000105">
    <property type="term" value="P:L-histidine biosynthetic process"/>
    <property type="evidence" value="ECO:0007669"/>
    <property type="project" value="UniProtKB-UniRule"/>
</dbReference>
<dbReference type="CDD" id="cd00609">
    <property type="entry name" value="AAT_like"/>
    <property type="match status" value="1"/>
</dbReference>
<dbReference type="Gene3D" id="3.90.1150.10">
    <property type="entry name" value="Aspartate Aminotransferase, domain 1"/>
    <property type="match status" value="1"/>
</dbReference>
<dbReference type="Gene3D" id="3.40.640.10">
    <property type="entry name" value="Type I PLP-dependent aspartate aminotransferase-like (Major domain)"/>
    <property type="match status" value="1"/>
</dbReference>
<dbReference type="HAMAP" id="MF_01023">
    <property type="entry name" value="HisC_aminotrans_2"/>
    <property type="match status" value="1"/>
</dbReference>
<dbReference type="InterPro" id="IPR004839">
    <property type="entry name" value="Aminotransferase_I/II_large"/>
</dbReference>
<dbReference type="InterPro" id="IPR005861">
    <property type="entry name" value="HisP_aminotrans"/>
</dbReference>
<dbReference type="InterPro" id="IPR050106">
    <property type="entry name" value="HistidinolP_aminotransfase"/>
</dbReference>
<dbReference type="InterPro" id="IPR015424">
    <property type="entry name" value="PyrdxlP-dep_Trfase"/>
</dbReference>
<dbReference type="InterPro" id="IPR015421">
    <property type="entry name" value="PyrdxlP-dep_Trfase_major"/>
</dbReference>
<dbReference type="InterPro" id="IPR015422">
    <property type="entry name" value="PyrdxlP-dep_Trfase_small"/>
</dbReference>
<dbReference type="NCBIfam" id="TIGR01141">
    <property type="entry name" value="hisC"/>
    <property type="match status" value="1"/>
</dbReference>
<dbReference type="PANTHER" id="PTHR43643:SF3">
    <property type="entry name" value="HISTIDINOL-PHOSPHATE AMINOTRANSFERASE"/>
    <property type="match status" value="1"/>
</dbReference>
<dbReference type="PANTHER" id="PTHR43643">
    <property type="entry name" value="HISTIDINOL-PHOSPHATE AMINOTRANSFERASE 2"/>
    <property type="match status" value="1"/>
</dbReference>
<dbReference type="Pfam" id="PF00155">
    <property type="entry name" value="Aminotran_1_2"/>
    <property type="match status" value="1"/>
</dbReference>
<dbReference type="SUPFAM" id="SSF53383">
    <property type="entry name" value="PLP-dependent transferases"/>
    <property type="match status" value="1"/>
</dbReference>
<keyword id="KW-0028">Amino-acid biosynthesis</keyword>
<keyword id="KW-0032">Aminotransferase</keyword>
<keyword id="KW-0368">Histidine biosynthesis</keyword>
<keyword id="KW-0663">Pyridoxal phosphate</keyword>
<keyword id="KW-0808">Transferase</keyword>
<reference key="1">
    <citation type="journal article" date="2004" name="Nat. Genet.">
        <title>Evidence in the Legionella pneumophila genome for exploitation of host cell functions and high genome plasticity.</title>
        <authorList>
            <person name="Cazalet C."/>
            <person name="Rusniok C."/>
            <person name="Brueggemann H."/>
            <person name="Zidane N."/>
            <person name="Magnier A."/>
            <person name="Ma L."/>
            <person name="Tichit M."/>
            <person name="Jarraud S."/>
            <person name="Bouchier C."/>
            <person name="Vandenesch F."/>
            <person name="Kunst F."/>
            <person name="Etienne J."/>
            <person name="Glaser P."/>
            <person name="Buchrieser C."/>
        </authorList>
    </citation>
    <scope>NUCLEOTIDE SEQUENCE [LARGE SCALE GENOMIC DNA]</scope>
    <source>
        <strain>Paris</strain>
    </source>
</reference>
<name>HIS82_LEGPA</name>
<protein>
    <recommendedName>
        <fullName evidence="1">Histidinol-phosphate aminotransferase 2</fullName>
        <ecNumber evidence="1">2.6.1.9</ecNumber>
    </recommendedName>
    <alternativeName>
        <fullName evidence="1">Imidazole acetol-phosphate transaminase 2</fullName>
    </alternativeName>
</protein>
<gene>
    <name evidence="1" type="primary">hisC2</name>
    <name type="ordered locus">lpp1979</name>
</gene>
<organism>
    <name type="scientific">Legionella pneumophila (strain Paris)</name>
    <dbReference type="NCBI Taxonomy" id="297246"/>
    <lineage>
        <taxon>Bacteria</taxon>
        <taxon>Pseudomonadati</taxon>
        <taxon>Pseudomonadota</taxon>
        <taxon>Gammaproteobacteria</taxon>
        <taxon>Legionellales</taxon>
        <taxon>Legionellaceae</taxon>
        <taxon>Legionella</taxon>
    </lineage>
</organism>
<proteinExistence type="inferred from homology"/>
<sequence length="369" mass="41489">MSIDFQQLPHAGIRSLIPYVPGKSIEELAKEKGITDIIKLASNENPLGCSPLALSAIQTMSSHYIATYPSPWNHPLMSKLASYLKVKPEQLFLSNGSDYLFNILLNCFALHTDRHILTHDYAFSTYAIQANSLQIPINSVPIGHNWEVNITDIVNACNQQTGIIFIANPNNPTGMLIQQEEIKYLLEQIPKSTLLVLDEAYYEFAASQLTVNSLDWLEEHPNLVVTRTFSKIYGMAGLRLGYAIANPSIINILKRVQLPFIVNQVALAAAYAAIDDDDFIQSSLKMNNEGMSQLQAGFNELNIKYLHSSCNFLTFDCEEDSIALYNYLLDNGIIVRPLHAYKMNNFIRVTIGTKEQNSRFLTALKNFYL</sequence>
<comment type="catalytic activity">
    <reaction evidence="1">
        <text>L-histidinol phosphate + 2-oxoglutarate = 3-(imidazol-4-yl)-2-oxopropyl phosphate + L-glutamate</text>
        <dbReference type="Rhea" id="RHEA:23744"/>
        <dbReference type="ChEBI" id="CHEBI:16810"/>
        <dbReference type="ChEBI" id="CHEBI:29985"/>
        <dbReference type="ChEBI" id="CHEBI:57766"/>
        <dbReference type="ChEBI" id="CHEBI:57980"/>
        <dbReference type="EC" id="2.6.1.9"/>
    </reaction>
</comment>
<comment type="cofactor">
    <cofactor evidence="1">
        <name>pyridoxal 5'-phosphate</name>
        <dbReference type="ChEBI" id="CHEBI:597326"/>
    </cofactor>
</comment>
<comment type="pathway">
    <text evidence="1">Amino-acid biosynthesis; L-histidine biosynthesis; L-histidine from 5-phospho-alpha-D-ribose 1-diphosphate: step 7/9.</text>
</comment>
<comment type="subunit">
    <text evidence="1">Homodimer.</text>
</comment>
<comment type="similarity">
    <text evidence="1">Belongs to the class-II pyridoxal-phosphate-dependent aminotransferase family. Histidinol-phosphate aminotransferase subfamily.</text>
</comment>
<evidence type="ECO:0000255" key="1">
    <source>
        <dbReference type="HAMAP-Rule" id="MF_01023"/>
    </source>
</evidence>
<feature type="chain" id="PRO_0000153380" description="Histidinol-phosphate aminotransferase 2">
    <location>
        <begin position="1"/>
        <end position="369"/>
    </location>
</feature>
<feature type="modified residue" description="N6-(pyridoxal phosphate)lysine" evidence="1">
    <location>
        <position position="231"/>
    </location>
</feature>
<accession>Q5X3Q5</accession>